<proteinExistence type="inferred from homology"/>
<organism>
    <name type="scientific">Oryza sativa subsp. japonica</name>
    <name type="common">Rice</name>
    <dbReference type="NCBI Taxonomy" id="39947"/>
    <lineage>
        <taxon>Eukaryota</taxon>
        <taxon>Viridiplantae</taxon>
        <taxon>Streptophyta</taxon>
        <taxon>Embryophyta</taxon>
        <taxon>Tracheophyta</taxon>
        <taxon>Spermatophyta</taxon>
        <taxon>Magnoliopsida</taxon>
        <taxon>Liliopsida</taxon>
        <taxon>Poales</taxon>
        <taxon>Poaceae</taxon>
        <taxon>BOP clade</taxon>
        <taxon>Oryzoideae</taxon>
        <taxon>Oryzeae</taxon>
        <taxon>Oryzinae</taxon>
        <taxon>Oryza</taxon>
        <taxon>Oryza sativa</taxon>
    </lineage>
</organism>
<evidence type="ECO:0000255" key="1"/>
<evidence type="ECO:0000255" key="2">
    <source>
        <dbReference type="PROSITE-ProRule" id="PRU00038"/>
    </source>
</evidence>
<evidence type="ECO:0000255" key="3">
    <source>
        <dbReference type="PROSITE-ProRule" id="PRU00076"/>
    </source>
</evidence>
<evidence type="ECO:0000255" key="4">
    <source>
        <dbReference type="PROSITE-ProRule" id="PRU00159"/>
    </source>
</evidence>
<evidence type="ECO:0000255" key="5">
    <source>
        <dbReference type="PROSITE-ProRule" id="PRU00315"/>
    </source>
</evidence>
<evidence type="ECO:0000255" key="6">
    <source>
        <dbReference type="PROSITE-ProRule" id="PRU00498"/>
    </source>
</evidence>
<evidence type="ECO:0000269" key="7">
    <source>
    </source>
</evidence>
<evidence type="ECO:0000303" key="8">
    <source>
    </source>
</evidence>
<evidence type="ECO:0000305" key="9"/>
<evidence type="ECO:0000312" key="10">
    <source>
        <dbReference type="EMBL" id="BAS88071.1"/>
    </source>
</evidence>
<evidence type="ECO:0000312" key="11">
    <source>
        <dbReference type="EMBL" id="CAE03339.2"/>
    </source>
</evidence>
<evidence type="ECO:0000312" key="12">
    <source>
        <dbReference type="EMBL" id="EAZ29746.1"/>
    </source>
</evidence>
<gene>
    <name evidence="8" type="primary">LECRK2</name>
    <name evidence="10" type="ordered locus">Os04g0202300</name>
    <name evidence="9" type="ordered locus">LOC_Os04g12560</name>
    <name evidence="12" type="ORF">OsJ_13805</name>
    <name evidence="11" type="ORF">OSJNBb0005B05.6</name>
</gene>
<name>LERK2_ORYSJ</name>
<feature type="signal peptide" evidence="1">
    <location>
        <begin position="1"/>
        <end position="23"/>
    </location>
</feature>
<feature type="chain" id="PRO_0000436167" description="G-type lectin S-receptor-like serine/threonine-protein kinase LECRK2" evidence="1">
    <location>
        <begin position="24"/>
        <end position="811"/>
    </location>
</feature>
<feature type="topological domain" description="Extracellular" evidence="9">
    <location>
        <begin position="24"/>
        <end position="464"/>
    </location>
</feature>
<feature type="transmembrane region" description="Helical" evidence="1">
    <location>
        <begin position="465"/>
        <end position="485"/>
    </location>
</feature>
<feature type="topological domain" description="Cytoplasmic" evidence="9">
    <location>
        <begin position="486"/>
        <end position="811"/>
    </location>
</feature>
<feature type="domain" description="Bulb-type lectin" evidence="2">
    <location>
        <begin position="24"/>
        <end position="153"/>
    </location>
</feature>
<feature type="domain" description="EGF-like; atypical" evidence="9">
    <location>
        <begin position="292"/>
        <end position="344"/>
    </location>
</feature>
<feature type="domain" description="PAN" evidence="5">
    <location>
        <begin position="352"/>
        <end position="436"/>
    </location>
</feature>
<feature type="domain" description="Protein kinase" evidence="4">
    <location>
        <begin position="521"/>
        <end position="795"/>
    </location>
</feature>
<feature type="active site" description="Proton acceptor" evidence="4">
    <location>
        <position position="645"/>
    </location>
</feature>
<feature type="binding site" evidence="4">
    <location>
        <begin position="527"/>
        <end position="535"/>
    </location>
    <ligand>
        <name>ATP</name>
        <dbReference type="ChEBI" id="CHEBI:30616"/>
    </ligand>
</feature>
<feature type="binding site" evidence="4">
    <location>
        <position position="551"/>
    </location>
    <ligand>
        <name>ATP</name>
        <dbReference type="ChEBI" id="CHEBI:30616"/>
    </ligand>
</feature>
<feature type="glycosylation site" description="N-linked (GlcNAc...) asparagine" evidence="6">
    <location>
        <position position="26"/>
    </location>
</feature>
<feature type="glycosylation site" description="N-linked (GlcNAc...) asparagine" evidence="6">
    <location>
        <position position="39"/>
    </location>
</feature>
<feature type="glycosylation site" description="N-linked (GlcNAc...) asparagine" evidence="6">
    <location>
        <position position="59"/>
    </location>
</feature>
<feature type="glycosylation site" description="N-linked (GlcNAc...) asparagine" evidence="6">
    <location>
        <position position="219"/>
    </location>
</feature>
<feature type="glycosylation site" description="N-linked (GlcNAc...) asparagine" evidence="6">
    <location>
        <position position="226"/>
    </location>
</feature>
<feature type="glycosylation site" description="N-linked (GlcNAc...) asparagine" evidence="6">
    <location>
        <position position="237"/>
    </location>
</feature>
<feature type="glycosylation site" description="N-linked (GlcNAc...) asparagine" evidence="6">
    <location>
        <position position="242"/>
    </location>
</feature>
<feature type="glycosylation site" description="N-linked (GlcNAc...) asparagine" evidence="6">
    <location>
        <position position="321"/>
    </location>
</feature>
<feature type="disulfide bond" evidence="3">
    <location>
        <begin position="296"/>
        <end position="314"/>
    </location>
</feature>
<feature type="disulfide bond" evidence="3">
    <location>
        <begin position="308"/>
        <end position="325"/>
    </location>
</feature>
<feature type="disulfide bond" evidence="3">
    <location>
        <begin position="327"/>
        <end position="343"/>
    </location>
</feature>
<feature type="disulfide bond" evidence="5">
    <location>
        <begin position="389"/>
        <end position="411"/>
    </location>
</feature>
<feature type="disulfide bond" evidence="5">
    <location>
        <begin position="393"/>
        <end position="399"/>
    </location>
</feature>
<dbReference type="EC" id="2.7.11.1" evidence="9"/>
<dbReference type="EMBL" id="AL606606">
    <property type="protein sequence ID" value="CAE03339.2"/>
    <property type="molecule type" value="Genomic_DNA"/>
</dbReference>
<dbReference type="EMBL" id="AP008210">
    <property type="protein sequence ID" value="BAH92518.1"/>
    <property type="status" value="ALT_INIT"/>
    <property type="molecule type" value="Genomic_DNA"/>
</dbReference>
<dbReference type="EMBL" id="AP014960">
    <property type="protein sequence ID" value="BAS88071.1"/>
    <property type="status" value="ALT_SEQ"/>
    <property type="molecule type" value="Genomic_DNA"/>
</dbReference>
<dbReference type="EMBL" id="CM000141">
    <property type="protein sequence ID" value="EAZ29746.1"/>
    <property type="molecule type" value="Genomic_DNA"/>
</dbReference>
<dbReference type="SMR" id="Q7FAZ2"/>
<dbReference type="FunCoup" id="Q7FAZ2">
    <property type="interactions" value="2170"/>
</dbReference>
<dbReference type="STRING" id="39947.Q7FAZ2"/>
<dbReference type="CAZy" id="GT1">
    <property type="family name" value="Glycosyltransferase Family 1"/>
</dbReference>
<dbReference type="GlyCosmos" id="Q7FAZ2">
    <property type="glycosylation" value="8 sites, No reported glycans"/>
</dbReference>
<dbReference type="PaxDb" id="39947-Q7FAZ2"/>
<dbReference type="EnsemblPlants" id="Os04t0202300-01">
    <property type="protein sequence ID" value="Os04t0202300-01"/>
    <property type="gene ID" value="Os04g0202300"/>
</dbReference>
<dbReference type="GeneID" id="9266608"/>
<dbReference type="Gramene" id="Os04t0202300-01">
    <property type="protein sequence ID" value="Os04t0202300-01"/>
    <property type="gene ID" value="Os04g0202300"/>
</dbReference>
<dbReference type="KEGG" id="dosa:Os04g0202350"/>
<dbReference type="KEGG" id="osa:9266608"/>
<dbReference type="eggNOG" id="ENOG502QQEW">
    <property type="taxonomic scope" value="Eukaryota"/>
</dbReference>
<dbReference type="InParanoid" id="Q7FAZ2"/>
<dbReference type="OrthoDB" id="1930390at2759"/>
<dbReference type="Proteomes" id="UP000000763">
    <property type="component" value="Chromosome 4"/>
</dbReference>
<dbReference type="Proteomes" id="UP000007752">
    <property type="component" value="Chromosome 4"/>
</dbReference>
<dbReference type="Proteomes" id="UP000059680">
    <property type="component" value="Chromosome 4"/>
</dbReference>
<dbReference type="GO" id="GO:0016020">
    <property type="term" value="C:membrane"/>
    <property type="evidence" value="ECO:0007669"/>
    <property type="project" value="UniProtKB-SubCell"/>
</dbReference>
<dbReference type="GO" id="GO:0005524">
    <property type="term" value="F:ATP binding"/>
    <property type="evidence" value="ECO:0007669"/>
    <property type="project" value="UniProtKB-KW"/>
</dbReference>
<dbReference type="GO" id="GO:0030246">
    <property type="term" value="F:carbohydrate binding"/>
    <property type="evidence" value="ECO:0007669"/>
    <property type="project" value="UniProtKB-KW"/>
</dbReference>
<dbReference type="GO" id="GO:0004672">
    <property type="term" value="F:protein kinase activity"/>
    <property type="evidence" value="ECO:0000318"/>
    <property type="project" value="GO_Central"/>
</dbReference>
<dbReference type="GO" id="GO:0106310">
    <property type="term" value="F:protein serine kinase activity"/>
    <property type="evidence" value="ECO:0007669"/>
    <property type="project" value="RHEA"/>
</dbReference>
<dbReference type="GO" id="GO:0004674">
    <property type="term" value="F:protein serine/threonine kinase activity"/>
    <property type="evidence" value="ECO:0007669"/>
    <property type="project" value="UniProtKB-KW"/>
</dbReference>
<dbReference type="GO" id="GO:0006952">
    <property type="term" value="P:defense response"/>
    <property type="evidence" value="ECO:0007669"/>
    <property type="project" value="UniProtKB-KW"/>
</dbReference>
<dbReference type="GO" id="GO:0051707">
    <property type="term" value="P:response to other organism"/>
    <property type="evidence" value="ECO:0007669"/>
    <property type="project" value="UniProtKB-ARBA"/>
</dbReference>
<dbReference type="CDD" id="cd01098">
    <property type="entry name" value="PAN_AP_plant"/>
    <property type="match status" value="1"/>
</dbReference>
<dbReference type="FunFam" id="1.10.510.10:FF:000237">
    <property type="entry name" value="G-type lectin S-receptor-like serine/threonine-protein kinase"/>
    <property type="match status" value="1"/>
</dbReference>
<dbReference type="FunFam" id="3.30.200.20:FF:000059">
    <property type="entry name" value="S-receptor-like serine/threonine-protein kinase"/>
    <property type="match status" value="1"/>
</dbReference>
<dbReference type="FunFam" id="2.90.10.10:FF:000006">
    <property type="entry name" value="Serine/threonine-protein kinase"/>
    <property type="match status" value="1"/>
</dbReference>
<dbReference type="FunFam" id="2.90.10.30:FF:000001">
    <property type="entry name" value="Serine/threonine-protein kinase"/>
    <property type="match status" value="1"/>
</dbReference>
<dbReference type="Gene3D" id="2.90.10.30">
    <property type="match status" value="1"/>
</dbReference>
<dbReference type="Gene3D" id="2.90.10.10">
    <property type="entry name" value="Bulb-type lectin domain"/>
    <property type="match status" value="1"/>
</dbReference>
<dbReference type="Gene3D" id="3.30.200.20">
    <property type="entry name" value="Phosphorylase Kinase, domain 1"/>
    <property type="match status" value="1"/>
</dbReference>
<dbReference type="Gene3D" id="1.10.510.10">
    <property type="entry name" value="Transferase(Phosphotransferase) domain 1"/>
    <property type="match status" value="1"/>
</dbReference>
<dbReference type="InterPro" id="IPR001480">
    <property type="entry name" value="Bulb-type_lectin_dom"/>
</dbReference>
<dbReference type="InterPro" id="IPR036426">
    <property type="entry name" value="Bulb-type_lectin_dom_sf"/>
</dbReference>
<dbReference type="InterPro" id="IPR051343">
    <property type="entry name" value="G-type_lectin_kinases/EP1-like"/>
</dbReference>
<dbReference type="InterPro" id="IPR011009">
    <property type="entry name" value="Kinase-like_dom_sf"/>
</dbReference>
<dbReference type="InterPro" id="IPR000719">
    <property type="entry name" value="Prot_kinase_dom"/>
</dbReference>
<dbReference type="InterPro" id="IPR017441">
    <property type="entry name" value="Protein_kinase_ATP_BS"/>
</dbReference>
<dbReference type="InterPro" id="IPR008271">
    <property type="entry name" value="Ser/Thr_kinase_AS"/>
</dbReference>
<dbReference type="InterPro" id="IPR024171">
    <property type="entry name" value="SRK-like_kinase"/>
</dbReference>
<dbReference type="PANTHER" id="PTHR47976">
    <property type="entry name" value="G-TYPE LECTIN S-RECEPTOR-LIKE SERINE/THREONINE-PROTEIN KINASE SD2-5"/>
    <property type="match status" value="1"/>
</dbReference>
<dbReference type="PANTHER" id="PTHR47976:SF89">
    <property type="entry name" value="G-TYPE LECTIN S-RECEPTOR-LIKE SERINE_THREONINE-PROTEIN KINASE LECRK3"/>
    <property type="match status" value="1"/>
</dbReference>
<dbReference type="Pfam" id="PF00069">
    <property type="entry name" value="Pkinase"/>
    <property type="match status" value="1"/>
</dbReference>
<dbReference type="PIRSF" id="PIRSF000641">
    <property type="entry name" value="SRK"/>
    <property type="match status" value="1"/>
</dbReference>
<dbReference type="SMART" id="SM00108">
    <property type="entry name" value="B_lectin"/>
    <property type="match status" value="1"/>
</dbReference>
<dbReference type="SMART" id="SM00220">
    <property type="entry name" value="S_TKc"/>
    <property type="match status" value="1"/>
</dbReference>
<dbReference type="SUPFAM" id="SSF51110">
    <property type="entry name" value="alpha-D-mannose-specific plant lectins"/>
    <property type="match status" value="2"/>
</dbReference>
<dbReference type="SUPFAM" id="SSF56112">
    <property type="entry name" value="Protein kinase-like (PK-like)"/>
    <property type="match status" value="1"/>
</dbReference>
<dbReference type="PROSITE" id="PS50927">
    <property type="entry name" value="BULB_LECTIN"/>
    <property type="match status" value="1"/>
</dbReference>
<dbReference type="PROSITE" id="PS00107">
    <property type="entry name" value="PROTEIN_KINASE_ATP"/>
    <property type="match status" value="1"/>
</dbReference>
<dbReference type="PROSITE" id="PS50011">
    <property type="entry name" value="PROTEIN_KINASE_DOM"/>
    <property type="match status" value="1"/>
</dbReference>
<dbReference type="PROSITE" id="PS00108">
    <property type="entry name" value="PROTEIN_KINASE_ST"/>
    <property type="match status" value="1"/>
</dbReference>
<protein>
    <recommendedName>
        <fullName evidence="9">G-type lectin S-receptor-like serine/threonine-protein kinase LECRK2</fullName>
        <shortName evidence="8">OsLecRK2</shortName>
        <ecNumber evidence="9">2.7.11.1</ecNumber>
    </recommendedName>
</protein>
<sequence>MAPLLFLPILQLLLLYCTKSAQAQLNISIGSSLTPQGINNSWISPTADFAFGFLAVDGNSSSYLLAVWFNKIADKTVIWYAKTSSNRQDDTIPIQVQAGSILKLADGALSLRDPSGNEVWNPRVTDVGYARMLDTGNFRLLGTDGATKWESFGDPSDTILPTQVLPLGTALHSRLLATDYSNGRFQLNVQDDGNLVLYLVAVPSAYYHDPYWASNTVGNGSQLVFNETGRIYFTLTNGSQINITSAGVDSMGDFFHRATLDTDGVFRQYIYPKSKQARSLWQEQWRAVDALPENICQTIQTKVGSGACGFNSYCTFDGTKNTTNCLCPQRYKFFDNERTYKGCRPDFEPQSCDLDETAAMVQYEMTPIDRINWPLSDYEQYSPIDETECRRLCVIDCFCSVAVFNKPSNTCYKKKLPLSNGNMDSSLQATVLLKVPRSTNSPSMISSGSSKWKKDKKYWILGSSLFFGSSVLVNFLLIFVLLFGTYCSITSRKKTQLSQLPSNSGLPSKIFTYRELEKATGGFHEVLGTGASGIVYKGQLQDECGTNIAVKKIEKLQQEAQKEFLVEVQTIGQTFHRNLVRLLGFCNEGTEKLLVYEFMSNGSLNTFLFNDSHPHWSLRVQVALGVSRGLFYLHEECNKQIIHCDMKPQNILLDDNFVAKISDFGLAKLLPVNQTQTNTGIRGTRGYVAPEWFKNIGITSKVDVYSFGVILLELVCCRKNVELEVADEEQTILTYWANDCYRCGRIDLLVASDDEAIFNIKKVERFVAVALWCLQEEPSMRPTMHKVMQMLDGAVQIPTPPDPSSYISSLA</sequence>
<keyword id="KW-0067">ATP-binding</keyword>
<keyword id="KW-1015">Disulfide bond</keyword>
<keyword id="KW-0245">EGF-like domain</keyword>
<keyword id="KW-0325">Glycoprotein</keyword>
<keyword id="KW-0418">Kinase</keyword>
<keyword id="KW-0430">Lectin</keyword>
<keyword id="KW-0472">Membrane</keyword>
<keyword id="KW-0547">Nucleotide-binding</keyword>
<keyword id="KW-0611">Plant defense</keyword>
<keyword id="KW-0675">Receptor</keyword>
<keyword id="KW-1185">Reference proteome</keyword>
<keyword id="KW-0723">Serine/threonine-protein kinase</keyword>
<keyword id="KW-0732">Signal</keyword>
<keyword id="KW-0808">Transferase</keyword>
<keyword id="KW-0812">Transmembrane</keyword>
<keyword id="KW-1133">Transmembrane helix</keyword>
<comment type="function">
    <text evidence="7">Involved in resistance against the herbivorous insect brown planthopper (N.lugens, BPH). Member of the BPH3 (BPH resistance locus 3) cluster which contains LECRK1, LECRK2 and LECRK3.</text>
</comment>
<comment type="catalytic activity">
    <reaction evidence="9">
        <text>L-seryl-[protein] + ATP = O-phospho-L-seryl-[protein] + ADP + H(+)</text>
        <dbReference type="Rhea" id="RHEA:17989"/>
        <dbReference type="Rhea" id="RHEA-COMP:9863"/>
        <dbReference type="Rhea" id="RHEA-COMP:11604"/>
        <dbReference type="ChEBI" id="CHEBI:15378"/>
        <dbReference type="ChEBI" id="CHEBI:29999"/>
        <dbReference type="ChEBI" id="CHEBI:30616"/>
        <dbReference type="ChEBI" id="CHEBI:83421"/>
        <dbReference type="ChEBI" id="CHEBI:456216"/>
        <dbReference type="EC" id="2.7.11.1"/>
    </reaction>
</comment>
<comment type="catalytic activity">
    <reaction evidence="9">
        <text>L-threonyl-[protein] + ATP = O-phospho-L-threonyl-[protein] + ADP + H(+)</text>
        <dbReference type="Rhea" id="RHEA:46608"/>
        <dbReference type="Rhea" id="RHEA-COMP:11060"/>
        <dbReference type="Rhea" id="RHEA-COMP:11605"/>
        <dbReference type="ChEBI" id="CHEBI:15378"/>
        <dbReference type="ChEBI" id="CHEBI:30013"/>
        <dbReference type="ChEBI" id="CHEBI:30616"/>
        <dbReference type="ChEBI" id="CHEBI:61977"/>
        <dbReference type="ChEBI" id="CHEBI:456216"/>
        <dbReference type="EC" id="2.7.11.1"/>
    </reaction>
</comment>
<comment type="subcellular location">
    <subcellularLocation>
        <location evidence="1">Membrane</location>
        <topology evidence="1">Single-pass type I membrane protein</topology>
    </subcellularLocation>
</comment>
<comment type="similarity">
    <text evidence="4">Belongs to the protein kinase superfamily. Ser/Thr protein kinase family.</text>
</comment>
<comment type="sequence caution" evidence="9">
    <conflict type="erroneous initiation">
        <sequence resource="EMBL-CDS" id="BAH92518"/>
    </conflict>
    <text>Truncated N-terminus.</text>
</comment>
<comment type="sequence caution" evidence="9">
    <conflict type="erroneous gene model prediction">
        <sequence resource="EMBL-CDS" id="BAS88071"/>
    </conflict>
</comment>
<reference key="1">
    <citation type="journal article" date="2002" name="Nature">
        <title>Sequence and analysis of rice chromosome 4.</title>
        <authorList>
            <person name="Feng Q."/>
            <person name="Zhang Y."/>
            <person name="Hao P."/>
            <person name="Wang S."/>
            <person name="Fu G."/>
            <person name="Huang Y."/>
            <person name="Li Y."/>
            <person name="Zhu J."/>
            <person name="Liu Y."/>
            <person name="Hu X."/>
            <person name="Jia P."/>
            <person name="Zhang Y."/>
            <person name="Zhao Q."/>
            <person name="Ying K."/>
            <person name="Yu S."/>
            <person name="Tang Y."/>
            <person name="Weng Q."/>
            <person name="Zhang L."/>
            <person name="Lu Y."/>
            <person name="Mu J."/>
            <person name="Lu Y."/>
            <person name="Zhang L.S."/>
            <person name="Yu Z."/>
            <person name="Fan D."/>
            <person name="Liu X."/>
            <person name="Lu T."/>
            <person name="Li C."/>
            <person name="Wu Y."/>
            <person name="Sun T."/>
            <person name="Lei H."/>
            <person name="Li T."/>
            <person name="Hu H."/>
            <person name="Guan J."/>
            <person name="Wu M."/>
            <person name="Zhang R."/>
            <person name="Zhou B."/>
            <person name="Chen Z."/>
            <person name="Chen L."/>
            <person name="Jin Z."/>
            <person name="Wang R."/>
            <person name="Yin H."/>
            <person name="Cai Z."/>
            <person name="Ren S."/>
            <person name="Lv G."/>
            <person name="Gu W."/>
            <person name="Zhu G."/>
            <person name="Tu Y."/>
            <person name="Jia J."/>
            <person name="Zhang Y."/>
            <person name="Chen J."/>
            <person name="Kang H."/>
            <person name="Chen X."/>
            <person name="Shao C."/>
            <person name="Sun Y."/>
            <person name="Hu Q."/>
            <person name="Zhang X."/>
            <person name="Zhang W."/>
            <person name="Wang L."/>
            <person name="Ding C."/>
            <person name="Sheng H."/>
            <person name="Gu J."/>
            <person name="Chen S."/>
            <person name="Ni L."/>
            <person name="Zhu F."/>
            <person name="Chen W."/>
            <person name="Lan L."/>
            <person name="Lai Y."/>
            <person name="Cheng Z."/>
            <person name="Gu M."/>
            <person name="Jiang J."/>
            <person name="Li J."/>
            <person name="Hong G."/>
            <person name="Xue Y."/>
            <person name="Han B."/>
        </authorList>
    </citation>
    <scope>NUCLEOTIDE SEQUENCE [LARGE SCALE GENOMIC DNA]</scope>
    <source>
        <strain>cv. Nipponbare</strain>
    </source>
</reference>
<reference key="2">
    <citation type="journal article" date="2005" name="Nature">
        <title>The map-based sequence of the rice genome.</title>
        <authorList>
            <consortium name="International rice genome sequencing project (IRGSP)"/>
        </authorList>
    </citation>
    <scope>NUCLEOTIDE SEQUENCE [LARGE SCALE GENOMIC DNA]</scope>
    <source>
        <strain>cv. Nipponbare</strain>
    </source>
</reference>
<reference key="3">
    <citation type="journal article" date="2008" name="Nucleic Acids Res.">
        <title>The rice annotation project database (RAP-DB): 2008 update.</title>
        <authorList>
            <consortium name="The rice annotation project (RAP)"/>
        </authorList>
    </citation>
    <scope>GENOME REANNOTATION</scope>
    <source>
        <strain>cv. Nipponbare</strain>
    </source>
</reference>
<reference key="4">
    <citation type="journal article" date="2013" name="Rice">
        <title>Improvement of the Oryza sativa Nipponbare reference genome using next generation sequence and optical map data.</title>
        <authorList>
            <person name="Kawahara Y."/>
            <person name="de la Bastide M."/>
            <person name="Hamilton J.P."/>
            <person name="Kanamori H."/>
            <person name="McCombie W.R."/>
            <person name="Ouyang S."/>
            <person name="Schwartz D.C."/>
            <person name="Tanaka T."/>
            <person name="Wu J."/>
            <person name="Zhou S."/>
            <person name="Childs K.L."/>
            <person name="Davidson R.M."/>
            <person name="Lin H."/>
            <person name="Quesada-Ocampo L."/>
            <person name="Vaillancourt B."/>
            <person name="Sakai H."/>
            <person name="Lee S.S."/>
            <person name="Kim J."/>
            <person name="Numa H."/>
            <person name="Itoh T."/>
            <person name="Buell C.R."/>
            <person name="Matsumoto T."/>
        </authorList>
    </citation>
    <scope>GENOME REANNOTATION</scope>
    <source>
        <strain>cv. Nipponbare</strain>
    </source>
</reference>
<reference key="5">
    <citation type="journal article" date="2005" name="PLoS Biol.">
        <title>The genomes of Oryza sativa: a history of duplications.</title>
        <authorList>
            <person name="Yu J."/>
            <person name="Wang J."/>
            <person name="Lin W."/>
            <person name="Li S."/>
            <person name="Li H."/>
            <person name="Zhou J."/>
            <person name="Ni P."/>
            <person name="Dong W."/>
            <person name="Hu S."/>
            <person name="Zeng C."/>
            <person name="Zhang J."/>
            <person name="Zhang Y."/>
            <person name="Li R."/>
            <person name="Xu Z."/>
            <person name="Li S."/>
            <person name="Li X."/>
            <person name="Zheng H."/>
            <person name="Cong L."/>
            <person name="Lin L."/>
            <person name="Yin J."/>
            <person name="Geng J."/>
            <person name="Li G."/>
            <person name="Shi J."/>
            <person name="Liu J."/>
            <person name="Lv H."/>
            <person name="Li J."/>
            <person name="Wang J."/>
            <person name="Deng Y."/>
            <person name="Ran L."/>
            <person name="Shi X."/>
            <person name="Wang X."/>
            <person name="Wu Q."/>
            <person name="Li C."/>
            <person name="Ren X."/>
            <person name="Wang J."/>
            <person name="Wang X."/>
            <person name="Li D."/>
            <person name="Liu D."/>
            <person name="Zhang X."/>
            <person name="Ji Z."/>
            <person name="Zhao W."/>
            <person name="Sun Y."/>
            <person name="Zhang Z."/>
            <person name="Bao J."/>
            <person name="Han Y."/>
            <person name="Dong L."/>
            <person name="Ji J."/>
            <person name="Chen P."/>
            <person name="Wu S."/>
            <person name="Liu J."/>
            <person name="Xiao Y."/>
            <person name="Bu D."/>
            <person name="Tan J."/>
            <person name="Yang L."/>
            <person name="Ye C."/>
            <person name="Zhang J."/>
            <person name="Xu J."/>
            <person name="Zhou Y."/>
            <person name="Yu Y."/>
            <person name="Zhang B."/>
            <person name="Zhuang S."/>
            <person name="Wei H."/>
            <person name="Liu B."/>
            <person name="Lei M."/>
            <person name="Yu H."/>
            <person name="Li Y."/>
            <person name="Xu H."/>
            <person name="Wei S."/>
            <person name="He X."/>
            <person name="Fang L."/>
            <person name="Zhang Z."/>
            <person name="Zhang Y."/>
            <person name="Huang X."/>
            <person name="Su Z."/>
            <person name="Tong W."/>
            <person name="Li J."/>
            <person name="Tong Z."/>
            <person name="Li S."/>
            <person name="Ye J."/>
            <person name="Wang L."/>
            <person name="Fang L."/>
            <person name="Lei T."/>
            <person name="Chen C.-S."/>
            <person name="Chen H.-C."/>
            <person name="Xu Z."/>
            <person name="Li H."/>
            <person name="Huang H."/>
            <person name="Zhang F."/>
            <person name="Xu H."/>
            <person name="Li N."/>
            <person name="Zhao C."/>
            <person name="Li S."/>
            <person name="Dong L."/>
            <person name="Huang Y."/>
            <person name="Li L."/>
            <person name="Xi Y."/>
            <person name="Qi Q."/>
            <person name="Li W."/>
            <person name="Zhang B."/>
            <person name="Hu W."/>
            <person name="Zhang Y."/>
            <person name="Tian X."/>
            <person name="Jiao Y."/>
            <person name="Liang X."/>
            <person name="Jin J."/>
            <person name="Gao L."/>
            <person name="Zheng W."/>
            <person name="Hao B."/>
            <person name="Liu S.-M."/>
            <person name="Wang W."/>
            <person name="Yuan L."/>
            <person name="Cao M."/>
            <person name="McDermott J."/>
            <person name="Samudrala R."/>
            <person name="Wang J."/>
            <person name="Wong G.K.-S."/>
            <person name="Yang H."/>
        </authorList>
    </citation>
    <scope>NUCLEOTIDE SEQUENCE [LARGE SCALE GENOMIC DNA]</scope>
    <source>
        <strain>cv. Nipponbare</strain>
    </source>
</reference>
<reference key="6">
    <citation type="journal article" date="2015" name="Nat. Biotechnol.">
        <title>A gene cluster encoding lectin receptor kinases confers broad-spectrum and durable insect resistance in rice.</title>
        <authorList>
            <person name="Liu Y."/>
            <person name="Wu H."/>
            <person name="Chen H."/>
            <person name="Liu Y."/>
            <person name="He J."/>
            <person name="Kang H."/>
            <person name="Sun Z."/>
            <person name="Pan G."/>
            <person name="Wang Q."/>
            <person name="Hu J."/>
            <person name="Zhou F."/>
            <person name="Zhou K."/>
            <person name="Zheng X."/>
            <person name="Ren Y."/>
            <person name="Chen L."/>
            <person name="Wang Y."/>
            <person name="Zhao Z."/>
            <person name="Lin Q."/>
            <person name="Wu F."/>
            <person name="Zhang X."/>
            <person name="Guo X."/>
            <person name="Cheng X."/>
            <person name="Jiang L."/>
            <person name="Wu C."/>
            <person name="Wang H."/>
            <person name="Wan J."/>
        </authorList>
    </citation>
    <scope>FUNCTION</scope>
</reference>
<accession>Q7FAZ2</accession>
<accession>A0A0P0W760</accession>
<accession>C7J1F9</accession>